<gene>
    <name type="primary">FAM86C2P</name>
</gene>
<proteinExistence type="uncertain"/>
<accession>A6NEL3</accession>
<feature type="chain" id="PRO_0000332118" description="Putative protein FAM86C2P">
    <location>
        <begin position="1"/>
        <end position="165"/>
    </location>
</feature>
<comment type="similarity">
    <text evidence="2">Belongs to the class I-like SAM-binding methyltransferase superfamily. EEF2KMT family.</text>
</comment>
<comment type="caution">
    <text evidence="2">Could be the product of a pseudogene.</text>
</comment>
<protein>
    <recommendedName>
        <fullName>Putative protein FAM86C2P</fullName>
        <ecNumber evidence="1">2.1.1.-</ecNumber>
    </recommendedName>
</protein>
<sequence>MAPEENAGTELLLQSLERRFLAARALRSFPWQSLEAKLRDSSDSELLRDILQKHEAVHTEPLDELYEVLAETLMAKESTQGHRSYLLTCCIAQKPSCRWSGSCGGWLPAGSTSGLLKSMWPLPSATQRRASCSPLSYAGLGSDGKWNLVMTRNCFPTKSTWRWQC</sequence>
<keyword id="KW-0489">Methyltransferase</keyword>
<keyword id="KW-1185">Reference proteome</keyword>
<keyword id="KW-0949">S-adenosyl-L-methionine</keyword>
<keyword id="KW-0808">Transferase</keyword>
<dbReference type="EC" id="2.1.1.-" evidence="1"/>
<dbReference type="EMBL" id="AP003716">
    <property type="status" value="NOT_ANNOTATED_CDS"/>
    <property type="molecule type" value="Genomic_DNA"/>
</dbReference>
<dbReference type="SMR" id="A6NEL3"/>
<dbReference type="BioMuta" id="HGNC:42392"/>
<dbReference type="jPOST" id="A6NEL3"/>
<dbReference type="MassIVE" id="A6NEL3"/>
<dbReference type="PeptideAtlas" id="A6NEL3"/>
<dbReference type="Pumba" id="A6NEL3"/>
<dbReference type="AGR" id="HGNC:42392"/>
<dbReference type="GeneCards" id="FAM86C2P"/>
<dbReference type="HGNC" id="HGNC:42392">
    <property type="gene designation" value="FAM86C2P"/>
</dbReference>
<dbReference type="neXtProt" id="NX_A6NEL3"/>
<dbReference type="InParanoid" id="A6NEL3"/>
<dbReference type="PAN-GO" id="A6NEL3">
    <property type="GO annotations" value="0 GO annotations based on evolutionary models"/>
</dbReference>
<dbReference type="PhylomeDB" id="A6NEL3"/>
<dbReference type="Pharos" id="A6NEL3">
    <property type="development level" value="Tdark"/>
</dbReference>
<dbReference type="Proteomes" id="UP000005640">
    <property type="component" value="Unplaced"/>
</dbReference>
<dbReference type="RNAct" id="A6NEL3">
    <property type="molecule type" value="protein"/>
</dbReference>
<dbReference type="GO" id="GO:0008168">
    <property type="term" value="F:methyltransferase activity"/>
    <property type="evidence" value="ECO:0007669"/>
    <property type="project" value="UniProtKB-KW"/>
</dbReference>
<dbReference type="GO" id="GO:0032259">
    <property type="term" value="P:methylation"/>
    <property type="evidence" value="ECO:0007669"/>
    <property type="project" value="UniProtKB-KW"/>
</dbReference>
<dbReference type="InterPro" id="IPR029426">
    <property type="entry name" value="FAM86_N"/>
</dbReference>
<dbReference type="Pfam" id="PF14904">
    <property type="entry name" value="FAM86"/>
    <property type="match status" value="2"/>
</dbReference>
<reference key="1">
    <citation type="journal article" date="2006" name="Nature">
        <title>Human chromosome 11 DNA sequence and analysis including novel gene identification.</title>
        <authorList>
            <person name="Taylor T.D."/>
            <person name="Noguchi H."/>
            <person name="Totoki Y."/>
            <person name="Toyoda A."/>
            <person name="Kuroki Y."/>
            <person name="Dewar K."/>
            <person name="Lloyd C."/>
            <person name="Itoh T."/>
            <person name="Takeda T."/>
            <person name="Kim D.-W."/>
            <person name="She X."/>
            <person name="Barlow K.F."/>
            <person name="Bloom T."/>
            <person name="Bruford E."/>
            <person name="Chang J.L."/>
            <person name="Cuomo C.A."/>
            <person name="Eichler E."/>
            <person name="FitzGerald M.G."/>
            <person name="Jaffe D.B."/>
            <person name="LaButti K."/>
            <person name="Nicol R."/>
            <person name="Park H.-S."/>
            <person name="Seaman C."/>
            <person name="Sougnez C."/>
            <person name="Yang X."/>
            <person name="Zimmer A.R."/>
            <person name="Zody M.C."/>
            <person name="Birren B.W."/>
            <person name="Nusbaum C."/>
            <person name="Fujiyama A."/>
            <person name="Hattori M."/>
            <person name="Rogers J."/>
            <person name="Lander E.S."/>
            <person name="Sakaki Y."/>
        </authorList>
    </citation>
    <scope>NUCLEOTIDE SEQUENCE [LARGE SCALE GENOMIC DNA]</scope>
</reference>
<name>F86C2_HUMAN</name>
<organism>
    <name type="scientific">Homo sapiens</name>
    <name type="common">Human</name>
    <dbReference type="NCBI Taxonomy" id="9606"/>
    <lineage>
        <taxon>Eukaryota</taxon>
        <taxon>Metazoa</taxon>
        <taxon>Chordata</taxon>
        <taxon>Craniata</taxon>
        <taxon>Vertebrata</taxon>
        <taxon>Euteleostomi</taxon>
        <taxon>Mammalia</taxon>
        <taxon>Eutheria</taxon>
        <taxon>Euarchontoglires</taxon>
        <taxon>Primates</taxon>
        <taxon>Haplorrhini</taxon>
        <taxon>Catarrhini</taxon>
        <taxon>Hominidae</taxon>
        <taxon>Homo</taxon>
    </lineage>
</organism>
<evidence type="ECO:0000250" key="1">
    <source>
        <dbReference type="UniProtKB" id="P47163"/>
    </source>
</evidence>
<evidence type="ECO:0000305" key="2"/>